<dbReference type="EC" id="7.1.1.-" evidence="1"/>
<dbReference type="EMBL" id="CP000857">
    <property type="protein sequence ID" value="ACN45555.1"/>
    <property type="molecule type" value="Genomic_DNA"/>
</dbReference>
<dbReference type="RefSeq" id="WP_000156666.1">
    <property type="nucleotide sequence ID" value="NC_012125.1"/>
</dbReference>
<dbReference type="SMR" id="C0Q051"/>
<dbReference type="KEGG" id="sei:SPC_1393"/>
<dbReference type="HOGENOM" id="CLU_007100_1_5_6"/>
<dbReference type="Proteomes" id="UP000001599">
    <property type="component" value="Chromosome"/>
</dbReference>
<dbReference type="GO" id="GO:0005886">
    <property type="term" value="C:plasma membrane"/>
    <property type="evidence" value="ECO:0007669"/>
    <property type="project" value="UniProtKB-SubCell"/>
</dbReference>
<dbReference type="GO" id="GO:0008137">
    <property type="term" value="F:NADH dehydrogenase (ubiquinone) activity"/>
    <property type="evidence" value="ECO:0007669"/>
    <property type="project" value="InterPro"/>
</dbReference>
<dbReference type="GO" id="GO:0050136">
    <property type="term" value="F:NADH:ubiquinone reductase (non-electrogenic) activity"/>
    <property type="evidence" value="ECO:0007669"/>
    <property type="project" value="UniProtKB-UniRule"/>
</dbReference>
<dbReference type="GO" id="GO:0048038">
    <property type="term" value="F:quinone binding"/>
    <property type="evidence" value="ECO:0007669"/>
    <property type="project" value="UniProtKB-KW"/>
</dbReference>
<dbReference type="GO" id="GO:0042773">
    <property type="term" value="P:ATP synthesis coupled electron transport"/>
    <property type="evidence" value="ECO:0007669"/>
    <property type="project" value="InterPro"/>
</dbReference>
<dbReference type="HAMAP" id="MF_00445">
    <property type="entry name" value="NDH1_NuoN_1"/>
    <property type="match status" value="1"/>
</dbReference>
<dbReference type="InterPro" id="IPR010096">
    <property type="entry name" value="NADH-Q_OxRdtase_suN/2"/>
</dbReference>
<dbReference type="InterPro" id="IPR001750">
    <property type="entry name" value="ND/Mrp_TM"/>
</dbReference>
<dbReference type="NCBIfam" id="TIGR01770">
    <property type="entry name" value="NDH_I_N"/>
    <property type="match status" value="1"/>
</dbReference>
<dbReference type="NCBIfam" id="NF004439">
    <property type="entry name" value="PRK05777.1-1"/>
    <property type="match status" value="1"/>
</dbReference>
<dbReference type="PANTHER" id="PTHR22773">
    <property type="entry name" value="NADH DEHYDROGENASE"/>
    <property type="match status" value="1"/>
</dbReference>
<dbReference type="Pfam" id="PF00361">
    <property type="entry name" value="Proton_antipo_M"/>
    <property type="match status" value="1"/>
</dbReference>
<keyword id="KW-0997">Cell inner membrane</keyword>
<keyword id="KW-1003">Cell membrane</keyword>
<keyword id="KW-0472">Membrane</keyword>
<keyword id="KW-0520">NAD</keyword>
<keyword id="KW-0874">Quinone</keyword>
<keyword id="KW-1278">Translocase</keyword>
<keyword id="KW-0812">Transmembrane</keyword>
<keyword id="KW-1133">Transmembrane helix</keyword>
<keyword id="KW-0813">Transport</keyword>
<keyword id="KW-0830">Ubiquinone</keyword>
<comment type="function">
    <text evidence="1">NDH-1 shuttles electrons from NADH, via FMN and iron-sulfur (Fe-S) centers, to quinones in the respiratory chain. The immediate electron acceptor for the enzyme in this species is believed to be ubiquinone. Couples the redox reaction to proton translocation (for every two electrons transferred, four hydrogen ions are translocated across the cytoplasmic membrane), and thus conserves the redox energy in a proton gradient.</text>
</comment>
<comment type="catalytic activity">
    <reaction evidence="1">
        <text>a quinone + NADH + 5 H(+)(in) = a quinol + NAD(+) + 4 H(+)(out)</text>
        <dbReference type="Rhea" id="RHEA:57888"/>
        <dbReference type="ChEBI" id="CHEBI:15378"/>
        <dbReference type="ChEBI" id="CHEBI:24646"/>
        <dbReference type="ChEBI" id="CHEBI:57540"/>
        <dbReference type="ChEBI" id="CHEBI:57945"/>
        <dbReference type="ChEBI" id="CHEBI:132124"/>
    </reaction>
</comment>
<comment type="subunit">
    <text evidence="1">NDH-1 is composed of 13 different subunits. Subunits NuoA, H, J, K, L, M, N constitute the membrane sector of the complex.</text>
</comment>
<comment type="subcellular location">
    <subcellularLocation>
        <location evidence="1">Cell inner membrane</location>
        <topology evidence="1">Multi-pass membrane protein</topology>
    </subcellularLocation>
</comment>
<comment type="similarity">
    <text evidence="1">Belongs to the complex I subunit 2 family.</text>
</comment>
<protein>
    <recommendedName>
        <fullName evidence="1">NADH-quinone oxidoreductase subunit N</fullName>
        <ecNumber evidence="1">7.1.1.-</ecNumber>
    </recommendedName>
    <alternativeName>
        <fullName evidence="1">NADH dehydrogenase I subunit N</fullName>
    </alternativeName>
    <alternativeName>
        <fullName evidence="1">NDH-1 subunit N</fullName>
    </alternativeName>
</protein>
<name>NUON_SALPC</name>
<reference key="1">
    <citation type="journal article" date="2009" name="PLoS ONE">
        <title>Salmonella paratyphi C: genetic divergence from Salmonella choleraesuis and pathogenic convergence with Salmonella typhi.</title>
        <authorList>
            <person name="Liu W.-Q."/>
            <person name="Feng Y."/>
            <person name="Wang Y."/>
            <person name="Zou Q.-H."/>
            <person name="Chen F."/>
            <person name="Guo J.-T."/>
            <person name="Peng Y.-H."/>
            <person name="Jin Y."/>
            <person name="Li Y.-G."/>
            <person name="Hu S.-N."/>
            <person name="Johnston R.N."/>
            <person name="Liu G.-R."/>
            <person name="Liu S.-L."/>
        </authorList>
    </citation>
    <scope>NUCLEOTIDE SEQUENCE [LARGE SCALE GENOMIC DNA]</scope>
    <source>
        <strain>RKS4594</strain>
    </source>
</reference>
<organism>
    <name type="scientific">Salmonella paratyphi C (strain RKS4594)</name>
    <dbReference type="NCBI Taxonomy" id="476213"/>
    <lineage>
        <taxon>Bacteria</taxon>
        <taxon>Pseudomonadati</taxon>
        <taxon>Pseudomonadota</taxon>
        <taxon>Gammaproteobacteria</taxon>
        <taxon>Enterobacterales</taxon>
        <taxon>Enterobacteriaceae</taxon>
        <taxon>Salmonella</taxon>
    </lineage>
</organism>
<sequence length="485" mass="51985">MTITPQHLIALLPLLIVGLTVVVVMLSIAWRRNHFLNATLSVIGLNAALVSLWFVGQAGAMDVTPLMRVDGFAMLYTGLVLLASLATCTFAYPWLEGYNDNQEEFYLLVLIASLGGILLANANHLAALFLGIELISLPLFGLIGYAFRQKRSLEASIKYTILSAAASSFLLFGMALVYAQSGNLSFEALGKSLGDGMLHEPLLLAGFGLMIVGLGFKLSLAPFHLWTPDVYQGAPAPVSTFLATASKIAIFGVVMRLFLYAPVGDSEAVRVVLGIIAFASIIFGNLMALSQTNIKRLLGYSSISHLGYLLVALIALQSGEMSMEAVGVYLAGYLFSSLGAFGVVSLMSSPFRGPDADSLYSYRGLFWHRPVLAAVMTVMMLSLAGIPMTLGFIGKFYVLAVGVQASLWWLVAAVVVGSAIGLYYYLRVAVSLYLHAPQQPGRDAPTNWQYSAGGIVVLISALLVLVLGVWPQPLISLVQLAMPLM</sequence>
<proteinExistence type="inferred from homology"/>
<accession>C0Q051</accession>
<feature type="chain" id="PRO_1000184917" description="NADH-quinone oxidoreductase subunit N">
    <location>
        <begin position="1"/>
        <end position="485"/>
    </location>
</feature>
<feature type="transmembrane region" description="Helical" evidence="1">
    <location>
        <begin position="8"/>
        <end position="28"/>
    </location>
</feature>
<feature type="transmembrane region" description="Helical" evidence="1">
    <location>
        <begin position="35"/>
        <end position="55"/>
    </location>
</feature>
<feature type="transmembrane region" description="Helical" evidence="1">
    <location>
        <begin position="71"/>
        <end position="91"/>
    </location>
</feature>
<feature type="transmembrane region" description="Helical" evidence="1">
    <location>
        <begin position="105"/>
        <end position="125"/>
    </location>
</feature>
<feature type="transmembrane region" description="Helical" evidence="1">
    <location>
        <begin position="127"/>
        <end position="147"/>
    </location>
</feature>
<feature type="transmembrane region" description="Helical" evidence="1">
    <location>
        <begin position="159"/>
        <end position="179"/>
    </location>
</feature>
<feature type="transmembrane region" description="Helical" evidence="1">
    <location>
        <begin position="203"/>
        <end position="223"/>
    </location>
</feature>
<feature type="transmembrane region" description="Helical" evidence="1">
    <location>
        <begin position="235"/>
        <end position="255"/>
    </location>
</feature>
<feature type="transmembrane region" description="Helical" evidence="1">
    <location>
        <begin position="271"/>
        <end position="291"/>
    </location>
</feature>
<feature type="transmembrane region" description="Helical" evidence="1">
    <location>
        <begin position="297"/>
        <end position="317"/>
    </location>
</feature>
<feature type="transmembrane region" description="Helical" evidence="1">
    <location>
        <begin position="326"/>
        <end position="346"/>
    </location>
</feature>
<feature type="transmembrane region" description="Helical" evidence="1">
    <location>
        <begin position="373"/>
        <end position="393"/>
    </location>
</feature>
<feature type="transmembrane region" description="Helical" evidence="1">
    <location>
        <begin position="408"/>
        <end position="430"/>
    </location>
</feature>
<feature type="transmembrane region" description="Helical" evidence="1">
    <location>
        <begin position="455"/>
        <end position="475"/>
    </location>
</feature>
<gene>
    <name evidence="1" type="primary">nuoN</name>
    <name type="ordered locus">SPC_1393</name>
</gene>
<evidence type="ECO:0000255" key="1">
    <source>
        <dbReference type="HAMAP-Rule" id="MF_00445"/>
    </source>
</evidence>